<feature type="chain" id="PRO_0000319372" description="Glucomannan 4-beta-mannosyltransferase 1">
    <location>
        <begin position="1"/>
        <end position="521"/>
    </location>
</feature>
<feature type="transmembrane region" description="Helical" evidence="1">
    <location>
        <begin position="22"/>
        <end position="42"/>
    </location>
</feature>
<feature type="transmembrane region" description="Helical" evidence="1">
    <location>
        <begin position="355"/>
        <end position="375"/>
    </location>
</feature>
<feature type="transmembrane region" description="Helical" evidence="1">
    <location>
        <begin position="391"/>
        <end position="411"/>
    </location>
</feature>
<feature type="transmembrane region" description="Helical" evidence="1">
    <location>
        <begin position="471"/>
        <end position="491"/>
    </location>
</feature>
<feature type="transmembrane region" description="Helical" evidence="1">
    <location>
        <begin position="495"/>
        <end position="515"/>
    </location>
</feature>
<feature type="active site" evidence="1">
    <location>
        <position position="123"/>
    </location>
</feature>
<feature type="active site" evidence="1">
    <location>
        <position position="276"/>
    </location>
</feature>
<feature type="binding site" evidence="1">
    <location>
        <position position="182"/>
    </location>
    <ligand>
        <name>substrate</name>
    </ligand>
</feature>
<feature type="binding site" evidence="1">
    <location>
        <position position="184"/>
    </location>
    <ligand>
        <name>substrate</name>
    </ligand>
</feature>
<keyword id="KW-0961">Cell wall biogenesis/degradation</keyword>
<keyword id="KW-0328">Glycosyltransferase</keyword>
<keyword id="KW-0333">Golgi apparatus</keyword>
<keyword id="KW-0472">Membrane</keyword>
<keyword id="KW-1185">Reference proteome</keyword>
<keyword id="KW-0808">Transferase</keyword>
<keyword id="KW-0812">Transmembrane</keyword>
<keyword id="KW-1133">Transmembrane helix</keyword>
<accession>Q7PC76</accession>
<accession>B7ETH8</accession>
<sequence>MEVNGGGAAGLPEAWSQVRAPVIVPLLRLAVAVCLTMSVLLFLERMYMAVVISGVKILRRRPDRRYRCDPIPDDDPELGTSAFPVVLIQIPMFNEREVYQLSIGAVCGLSWPSDRLVVQVLDDSTDPVIKEMVRIECERWAHKGVNITYQIRENRKGYKAGALKEGMKHGYVRECEYVAIFDADFQPDPDFLRRTIPFLVHNSDIALVQARWRFVNADECLMTRMQEMSLDYHFTVEQEVSSSVCAFFGFNGTAGVWRVSAVNEAGGWKDRTTVEDMDLAIRASLKGWKFVYLGDVQVKSELPSTFKAFRFQQHRWSCGPANLFRKMLMEIVRNKKVTIWKKIHVIYNFFLIRKIIAHIVTFAFYCLIIPATIFVPEVRIPKWGCVYIPTIITLLNSVGTPRSFHLLFFWILFENVMSLHRTKATLIGLLEAGRANEWVVTEKLGNALKMKSSSKSSAKKSFMRVWDRLNVTELGVAAFLFSCGWYDLAFGKDHFFIYLFFQGAAFFIVGIGYVGTIVPQS</sequence>
<evidence type="ECO:0000255" key="1"/>
<evidence type="ECO:0000269" key="2">
    <source>
    </source>
</evidence>
<evidence type="ECO:0000303" key="3">
    <source>
    </source>
</evidence>
<evidence type="ECO:0000305" key="4"/>
<reference key="1">
    <citation type="journal article" date="2005" name="Nature">
        <title>The map-based sequence of the rice genome.</title>
        <authorList>
            <consortium name="International rice genome sequencing project (IRGSP)"/>
        </authorList>
    </citation>
    <scope>NUCLEOTIDE SEQUENCE [LARGE SCALE GENOMIC DNA]</scope>
    <source>
        <strain>cv. Nipponbare</strain>
    </source>
</reference>
<reference key="2">
    <citation type="journal article" date="2008" name="Nucleic Acids Res.">
        <title>The rice annotation project database (RAP-DB): 2008 update.</title>
        <authorList>
            <consortium name="The rice annotation project (RAP)"/>
        </authorList>
    </citation>
    <scope>GENOME REANNOTATION</scope>
    <source>
        <strain>cv. Nipponbare</strain>
    </source>
</reference>
<reference key="3">
    <citation type="journal article" date="2013" name="Rice">
        <title>Improvement of the Oryza sativa Nipponbare reference genome using next generation sequence and optical map data.</title>
        <authorList>
            <person name="Kawahara Y."/>
            <person name="de la Bastide M."/>
            <person name="Hamilton J.P."/>
            <person name="Kanamori H."/>
            <person name="McCombie W.R."/>
            <person name="Ouyang S."/>
            <person name="Schwartz D.C."/>
            <person name="Tanaka T."/>
            <person name="Wu J."/>
            <person name="Zhou S."/>
            <person name="Childs K.L."/>
            <person name="Davidson R.M."/>
            <person name="Lin H."/>
            <person name="Quesada-Ocampo L."/>
            <person name="Vaillancourt B."/>
            <person name="Sakai H."/>
            <person name="Lee S.S."/>
            <person name="Kim J."/>
            <person name="Numa H."/>
            <person name="Itoh T."/>
            <person name="Buell C.R."/>
            <person name="Matsumoto T."/>
        </authorList>
    </citation>
    <scope>GENOME REANNOTATION</scope>
    <source>
        <strain>cv. Nipponbare</strain>
    </source>
</reference>
<reference key="4">
    <citation type="journal article" date="2003" name="Science">
        <title>Collection, mapping, and annotation of over 28,000 cDNA clones from japonica rice.</title>
        <authorList>
            <consortium name="The rice full-length cDNA consortium"/>
        </authorList>
    </citation>
    <scope>NUCLEOTIDE SEQUENCE [LARGE SCALE MRNA]</scope>
    <source>
        <strain>cv. Nipponbare</strain>
    </source>
</reference>
<reference key="5">
    <citation type="journal article" date="2002" name="Plant Physiol.">
        <title>Cellulose synthase-like genes of rice.</title>
        <authorList>
            <person name="Hazen S.P."/>
            <person name="Scott-Craig J.S."/>
            <person name="Walton J.D."/>
        </authorList>
    </citation>
    <scope>IDENTIFICATION</scope>
    <scope>GENE FAMILY</scope>
    <scope>NOMENCLATURE</scope>
</reference>
<reference key="6">
    <citation type="journal article" date="2007" name="Plant Physiol.">
        <title>Functional genomic analysis supports conservation of function among cellulose synthase-like a gene family members and suggests diverse roles of mannans in plants.</title>
        <authorList>
            <person name="Liepman A.H."/>
            <person name="Nairn C.J."/>
            <person name="Willats W.G.T."/>
            <person name="Soerensen I."/>
            <person name="Roberts A.W."/>
            <person name="Keegstra K."/>
        </authorList>
    </citation>
    <scope>FUNCTION</scope>
    <scope>CATALYTIC ACTIVITY</scope>
</reference>
<comment type="function">
    <text evidence="2">Possesses glucomannan synthase and mannan synthase activities in vitro. Mannan synthase consists of a 4-beta-mannosyltransferase activity on mannan using GDP-mannose. The beta-1,4-mannan product is the backbone for galactomannan synthesis by galactomannan galactosyltransferase. Galactomannan is a noncellulosic polysaccharides of plant cell wall.</text>
</comment>
<comment type="catalytic activity">
    <reaction evidence="2">
        <text>GDP-mannose + (glucomannan)n = GDP + (glucomannan)n+1.</text>
        <dbReference type="EC" id="2.4.1.32"/>
    </reaction>
</comment>
<comment type="subcellular location">
    <subcellularLocation>
        <location evidence="4">Golgi apparatus membrane</location>
        <topology evidence="4">Multi-pass membrane protein</topology>
    </subcellularLocation>
</comment>
<comment type="similarity">
    <text evidence="4">Belongs to the glycosyltransferase 2 family. Plant cellulose synthase-like A subfamily.</text>
</comment>
<proteinExistence type="evidence at protein level"/>
<gene>
    <name evidence="3" type="primary">CSLA1</name>
    <name type="ordered locus">Os02g0192500</name>
    <name type="ordered locus">LOC_Os02g09930</name>
    <name type="ORF">P0437H03.110</name>
    <name type="ORF">P0453H10.31</name>
</gene>
<dbReference type="EC" id="2.4.1.32" evidence="2"/>
<dbReference type="EMBL" id="AP000366">
    <property type="protein sequence ID" value="BAD15390.1"/>
    <property type="molecule type" value="Genomic_DNA"/>
</dbReference>
<dbReference type="EMBL" id="AP005785">
    <property type="protein sequence ID" value="BAD34025.1"/>
    <property type="molecule type" value="Genomic_DNA"/>
</dbReference>
<dbReference type="EMBL" id="AP008208">
    <property type="protein sequence ID" value="BAF08078.1"/>
    <property type="molecule type" value="Genomic_DNA"/>
</dbReference>
<dbReference type="EMBL" id="AP014958">
    <property type="protein sequence ID" value="BAS77418.1"/>
    <property type="molecule type" value="Genomic_DNA"/>
</dbReference>
<dbReference type="EMBL" id="AK102694">
    <property type="protein sequence ID" value="BAG95675.1"/>
    <property type="molecule type" value="mRNA"/>
</dbReference>
<dbReference type="EMBL" id="BK000080">
    <property type="protein sequence ID" value="DAA01743.1"/>
    <property type="molecule type" value="Genomic_DNA"/>
</dbReference>
<dbReference type="RefSeq" id="XP_015625335.1">
    <property type="nucleotide sequence ID" value="XM_015769849.1"/>
</dbReference>
<dbReference type="SMR" id="Q7PC76"/>
<dbReference type="FunCoup" id="Q7PC76">
    <property type="interactions" value="49"/>
</dbReference>
<dbReference type="STRING" id="39947.Q7PC76"/>
<dbReference type="CAZy" id="GT2">
    <property type="family name" value="Glycosyltransferase Family 2"/>
</dbReference>
<dbReference type="PaxDb" id="39947-Q7PC76"/>
<dbReference type="EnsemblPlants" id="Os02t0192500-01">
    <property type="protein sequence ID" value="Os02t0192500-01"/>
    <property type="gene ID" value="Os02g0192500"/>
</dbReference>
<dbReference type="Gramene" id="Os02t0192500-01">
    <property type="protein sequence ID" value="Os02t0192500-01"/>
    <property type="gene ID" value="Os02g0192500"/>
</dbReference>
<dbReference type="KEGG" id="dosa:Os02g0192500"/>
<dbReference type="eggNOG" id="ENOG502QR7J">
    <property type="taxonomic scope" value="Eukaryota"/>
</dbReference>
<dbReference type="InParanoid" id="Q7PC76"/>
<dbReference type="OMA" id="VECERWA"/>
<dbReference type="OrthoDB" id="72851at2759"/>
<dbReference type="Proteomes" id="UP000000763">
    <property type="component" value="Chromosome 2"/>
</dbReference>
<dbReference type="Proteomes" id="UP000059680">
    <property type="component" value="Chromosome 2"/>
</dbReference>
<dbReference type="ExpressionAtlas" id="Q7PC76">
    <property type="expression patterns" value="baseline and differential"/>
</dbReference>
<dbReference type="GO" id="GO:0005794">
    <property type="term" value="C:Golgi apparatus"/>
    <property type="evidence" value="ECO:0000318"/>
    <property type="project" value="GO_Central"/>
</dbReference>
<dbReference type="GO" id="GO:0000139">
    <property type="term" value="C:Golgi membrane"/>
    <property type="evidence" value="ECO:0007669"/>
    <property type="project" value="UniProtKB-SubCell"/>
</dbReference>
<dbReference type="GO" id="GO:0047259">
    <property type="term" value="F:glucomannan 4-beta-mannosyltransferase activity"/>
    <property type="evidence" value="ECO:0007669"/>
    <property type="project" value="UniProtKB-EC"/>
</dbReference>
<dbReference type="GO" id="GO:0051753">
    <property type="term" value="F:mannan synthase activity"/>
    <property type="evidence" value="ECO:0000318"/>
    <property type="project" value="GO_Central"/>
</dbReference>
<dbReference type="GO" id="GO:0071555">
    <property type="term" value="P:cell wall organization"/>
    <property type="evidence" value="ECO:0007669"/>
    <property type="project" value="UniProtKB-KW"/>
</dbReference>
<dbReference type="CDD" id="cd06437">
    <property type="entry name" value="CESA_CaSu_A2"/>
    <property type="match status" value="1"/>
</dbReference>
<dbReference type="FunFam" id="3.90.550.10:FF:000015">
    <property type="entry name" value="Glucomannan 4-beta-mannosyltransferase 9"/>
    <property type="match status" value="1"/>
</dbReference>
<dbReference type="Gene3D" id="3.90.550.10">
    <property type="entry name" value="Spore Coat Polysaccharide Biosynthesis Protein SpsA, Chain A"/>
    <property type="match status" value="1"/>
</dbReference>
<dbReference type="InterPro" id="IPR001173">
    <property type="entry name" value="Glyco_trans_2-like"/>
</dbReference>
<dbReference type="InterPro" id="IPR029044">
    <property type="entry name" value="Nucleotide-diphossugar_trans"/>
</dbReference>
<dbReference type="PANTHER" id="PTHR32044:SF75">
    <property type="entry name" value="GLUCOMANNAN 4-BETA-MANNOSYLTRANSFERASE 1"/>
    <property type="match status" value="1"/>
</dbReference>
<dbReference type="PANTHER" id="PTHR32044">
    <property type="entry name" value="GLUCOMANNAN 4-BETA-MANNOSYLTRANSFERASE 9"/>
    <property type="match status" value="1"/>
</dbReference>
<dbReference type="Pfam" id="PF13632">
    <property type="entry name" value="Glyco_trans_2_3"/>
    <property type="match status" value="1"/>
</dbReference>
<dbReference type="SUPFAM" id="SSF53448">
    <property type="entry name" value="Nucleotide-diphospho-sugar transferases"/>
    <property type="match status" value="1"/>
</dbReference>
<protein>
    <recommendedName>
        <fullName evidence="4">Glucomannan 4-beta-mannosyltransferase 1</fullName>
        <ecNumber evidence="2">2.4.1.32</ecNumber>
    </recommendedName>
    <alternativeName>
        <fullName evidence="3">Cellulose synthase-like protein A1</fullName>
        <shortName evidence="3">OsCslA1</shortName>
    </alternativeName>
    <alternativeName>
        <fullName evidence="4">Glucomannan-synthase 1</fullName>
        <shortName evidence="4">Mannan synthase 1</shortName>
    </alternativeName>
</protein>
<name>CSLA1_ORYSJ</name>
<organism>
    <name type="scientific">Oryza sativa subsp. japonica</name>
    <name type="common">Rice</name>
    <dbReference type="NCBI Taxonomy" id="39947"/>
    <lineage>
        <taxon>Eukaryota</taxon>
        <taxon>Viridiplantae</taxon>
        <taxon>Streptophyta</taxon>
        <taxon>Embryophyta</taxon>
        <taxon>Tracheophyta</taxon>
        <taxon>Spermatophyta</taxon>
        <taxon>Magnoliopsida</taxon>
        <taxon>Liliopsida</taxon>
        <taxon>Poales</taxon>
        <taxon>Poaceae</taxon>
        <taxon>BOP clade</taxon>
        <taxon>Oryzoideae</taxon>
        <taxon>Oryzeae</taxon>
        <taxon>Oryzinae</taxon>
        <taxon>Oryza</taxon>
        <taxon>Oryza sativa</taxon>
    </lineage>
</organism>